<protein>
    <recommendedName>
        <fullName evidence="1">Energy-coupling factor transporter ATP-binding protein EcfA2</fullName>
        <shortName evidence="1">ECF transporter A component EcfA2</shortName>
        <ecNumber evidence="1">7.-.-.-</ecNumber>
    </recommendedName>
</protein>
<accession>Q6G7A0</accession>
<name>ECFA2_STAAS</name>
<gene>
    <name evidence="1" type="primary">ecfA2</name>
    <name type="synonym">cbiO2</name>
    <name type="ordered locus">SAS2112</name>
</gene>
<organism>
    <name type="scientific">Staphylococcus aureus (strain MSSA476)</name>
    <dbReference type="NCBI Taxonomy" id="282459"/>
    <lineage>
        <taxon>Bacteria</taxon>
        <taxon>Bacillati</taxon>
        <taxon>Bacillota</taxon>
        <taxon>Bacilli</taxon>
        <taxon>Bacillales</taxon>
        <taxon>Staphylococcaceae</taxon>
        <taxon>Staphylococcus</taxon>
    </lineage>
</organism>
<reference key="1">
    <citation type="journal article" date="2004" name="Proc. Natl. Acad. Sci. U.S.A.">
        <title>Complete genomes of two clinical Staphylococcus aureus strains: evidence for the rapid evolution of virulence and drug resistance.</title>
        <authorList>
            <person name="Holden M.T.G."/>
            <person name="Feil E.J."/>
            <person name="Lindsay J.A."/>
            <person name="Peacock S.J."/>
            <person name="Day N.P.J."/>
            <person name="Enright M.C."/>
            <person name="Foster T.J."/>
            <person name="Moore C.E."/>
            <person name="Hurst L."/>
            <person name="Atkin R."/>
            <person name="Barron A."/>
            <person name="Bason N."/>
            <person name="Bentley S.D."/>
            <person name="Chillingworth C."/>
            <person name="Chillingworth T."/>
            <person name="Churcher C."/>
            <person name="Clark L."/>
            <person name="Corton C."/>
            <person name="Cronin A."/>
            <person name="Doggett J."/>
            <person name="Dowd L."/>
            <person name="Feltwell T."/>
            <person name="Hance Z."/>
            <person name="Harris B."/>
            <person name="Hauser H."/>
            <person name="Holroyd S."/>
            <person name="Jagels K."/>
            <person name="James K.D."/>
            <person name="Lennard N."/>
            <person name="Line A."/>
            <person name="Mayes R."/>
            <person name="Moule S."/>
            <person name="Mungall K."/>
            <person name="Ormond D."/>
            <person name="Quail M.A."/>
            <person name="Rabbinowitsch E."/>
            <person name="Rutherford K.M."/>
            <person name="Sanders M."/>
            <person name="Sharp S."/>
            <person name="Simmonds M."/>
            <person name="Stevens K."/>
            <person name="Whitehead S."/>
            <person name="Barrell B.G."/>
            <person name="Spratt B.G."/>
            <person name="Parkhill J."/>
        </authorList>
    </citation>
    <scope>NUCLEOTIDE SEQUENCE [LARGE SCALE GENOMIC DNA]</scope>
    <source>
        <strain>MSSA476</strain>
    </source>
</reference>
<sequence>MTIRFDNVSYTYQKGTPYQHQAIHDVNTEFEQGKYYAIVGQTGSGKSTLIQNINALLKPTTGTVTVDDITITHKTKDKYIRPVRKRIGMVFQFPESQLFEDTVEREMIFGPKNFKMNLDEAKNYAHRLLMDLGFSRDVMSQSPFQMSGGQMRKIAIVSILAMNPDIIVVDEPTAGLDPQSKRQVMRLLKSLQTDENKAIILISHDMNEVARYADEVIVMKEGSIVSQTSPKELFKDKKKLADWHIGLPEIVQLQYDFEQKYQTKLKDIALTEEAFVSLYKEWQHEK</sequence>
<keyword id="KW-0067">ATP-binding</keyword>
<keyword id="KW-1003">Cell membrane</keyword>
<keyword id="KW-0472">Membrane</keyword>
<keyword id="KW-0547">Nucleotide-binding</keyword>
<keyword id="KW-1278">Translocase</keyword>
<keyword id="KW-0813">Transport</keyword>
<comment type="function">
    <text evidence="1">ATP-binding (A) component of a common energy-coupling factor (ECF) ABC-transporter complex. Unlike classic ABC transporters this ECF transporter provides the energy necessary to transport a number of different substrates.</text>
</comment>
<comment type="subunit">
    <text evidence="1">Forms a stable energy-coupling factor (ECF) transporter complex composed of 2 membrane-embedded substrate-binding proteins (S component), 2 ATP-binding proteins (A component) and 2 transmembrane proteins (T component).</text>
</comment>
<comment type="subcellular location">
    <subcellularLocation>
        <location evidence="1">Cell membrane</location>
        <topology evidence="1">Peripheral membrane protein</topology>
    </subcellularLocation>
</comment>
<comment type="similarity">
    <text evidence="1">Belongs to the ABC transporter superfamily. Energy-coupling factor EcfA family.</text>
</comment>
<evidence type="ECO:0000255" key="1">
    <source>
        <dbReference type="HAMAP-Rule" id="MF_01710"/>
    </source>
</evidence>
<proteinExistence type="inferred from homology"/>
<feature type="chain" id="PRO_0000092074" description="Energy-coupling factor transporter ATP-binding protein EcfA2">
    <location>
        <begin position="1"/>
        <end position="286"/>
    </location>
</feature>
<feature type="domain" description="ABC transporter" evidence="1">
    <location>
        <begin position="3"/>
        <end position="246"/>
    </location>
</feature>
<feature type="binding site" evidence="1">
    <location>
        <begin position="40"/>
        <end position="47"/>
    </location>
    <ligand>
        <name>ATP</name>
        <dbReference type="ChEBI" id="CHEBI:30616"/>
    </ligand>
</feature>
<dbReference type="EC" id="7.-.-.-" evidence="1"/>
<dbReference type="EMBL" id="BX571857">
    <property type="protein sequence ID" value="CAG43923.1"/>
    <property type="molecule type" value="Genomic_DNA"/>
</dbReference>
<dbReference type="RefSeq" id="WP_000155386.1">
    <property type="nucleotide sequence ID" value="NC_002953.3"/>
</dbReference>
<dbReference type="SMR" id="Q6G7A0"/>
<dbReference type="KEGG" id="sas:SAS2112"/>
<dbReference type="HOGENOM" id="CLU_000604_1_22_9"/>
<dbReference type="GO" id="GO:0043190">
    <property type="term" value="C:ATP-binding cassette (ABC) transporter complex"/>
    <property type="evidence" value="ECO:0007669"/>
    <property type="project" value="TreeGrafter"/>
</dbReference>
<dbReference type="GO" id="GO:0005524">
    <property type="term" value="F:ATP binding"/>
    <property type="evidence" value="ECO:0007669"/>
    <property type="project" value="UniProtKB-KW"/>
</dbReference>
<dbReference type="GO" id="GO:0016887">
    <property type="term" value="F:ATP hydrolysis activity"/>
    <property type="evidence" value="ECO:0007669"/>
    <property type="project" value="InterPro"/>
</dbReference>
<dbReference type="GO" id="GO:0042626">
    <property type="term" value="F:ATPase-coupled transmembrane transporter activity"/>
    <property type="evidence" value="ECO:0007669"/>
    <property type="project" value="TreeGrafter"/>
</dbReference>
<dbReference type="CDD" id="cd03225">
    <property type="entry name" value="ABC_cobalt_CbiO_domain1"/>
    <property type="match status" value="1"/>
</dbReference>
<dbReference type="FunFam" id="3.40.50.300:FF:000224">
    <property type="entry name" value="Energy-coupling factor transporter ATP-binding protein EcfA"/>
    <property type="match status" value="1"/>
</dbReference>
<dbReference type="Gene3D" id="3.40.50.300">
    <property type="entry name" value="P-loop containing nucleotide triphosphate hydrolases"/>
    <property type="match status" value="1"/>
</dbReference>
<dbReference type="InterPro" id="IPR003593">
    <property type="entry name" value="AAA+_ATPase"/>
</dbReference>
<dbReference type="InterPro" id="IPR003439">
    <property type="entry name" value="ABC_transporter-like_ATP-bd"/>
</dbReference>
<dbReference type="InterPro" id="IPR017871">
    <property type="entry name" value="ABC_transporter-like_CS"/>
</dbReference>
<dbReference type="InterPro" id="IPR015856">
    <property type="entry name" value="ABC_transpr_CbiO/EcfA_su"/>
</dbReference>
<dbReference type="InterPro" id="IPR050095">
    <property type="entry name" value="ECF_ABC_transporter_ATP-bd"/>
</dbReference>
<dbReference type="InterPro" id="IPR030946">
    <property type="entry name" value="EcfA2"/>
</dbReference>
<dbReference type="InterPro" id="IPR027417">
    <property type="entry name" value="P-loop_NTPase"/>
</dbReference>
<dbReference type="NCBIfam" id="TIGR04521">
    <property type="entry name" value="ECF_ATPase_2"/>
    <property type="match status" value="1"/>
</dbReference>
<dbReference type="NCBIfam" id="NF010166">
    <property type="entry name" value="PRK13646.1"/>
    <property type="match status" value="1"/>
</dbReference>
<dbReference type="PANTHER" id="PTHR43553:SF27">
    <property type="entry name" value="ENERGY-COUPLING FACTOR TRANSPORTER ATP-BINDING PROTEIN ECFA2"/>
    <property type="match status" value="1"/>
</dbReference>
<dbReference type="PANTHER" id="PTHR43553">
    <property type="entry name" value="HEAVY METAL TRANSPORTER"/>
    <property type="match status" value="1"/>
</dbReference>
<dbReference type="Pfam" id="PF00005">
    <property type="entry name" value="ABC_tran"/>
    <property type="match status" value="1"/>
</dbReference>
<dbReference type="SMART" id="SM00382">
    <property type="entry name" value="AAA"/>
    <property type="match status" value="1"/>
</dbReference>
<dbReference type="SUPFAM" id="SSF52540">
    <property type="entry name" value="P-loop containing nucleoside triphosphate hydrolases"/>
    <property type="match status" value="1"/>
</dbReference>
<dbReference type="PROSITE" id="PS00211">
    <property type="entry name" value="ABC_TRANSPORTER_1"/>
    <property type="match status" value="1"/>
</dbReference>
<dbReference type="PROSITE" id="PS50893">
    <property type="entry name" value="ABC_TRANSPORTER_2"/>
    <property type="match status" value="1"/>
</dbReference>
<dbReference type="PROSITE" id="PS51246">
    <property type="entry name" value="CBIO"/>
    <property type="match status" value="1"/>
</dbReference>